<dbReference type="EMBL" id="FM200053">
    <property type="protein sequence ID" value="CAR62147.1"/>
    <property type="molecule type" value="Genomic_DNA"/>
</dbReference>
<dbReference type="RefSeq" id="WP_000609652.1">
    <property type="nucleotide sequence ID" value="NC_011147.1"/>
</dbReference>
<dbReference type="SMR" id="B5BKG4"/>
<dbReference type="KEGG" id="sek:SSPA3861"/>
<dbReference type="HOGENOM" id="CLU_168367_0_0_6"/>
<dbReference type="Proteomes" id="UP000001869">
    <property type="component" value="Chromosome"/>
</dbReference>
<dbReference type="GO" id="GO:0045283">
    <property type="term" value="C:fumarate reductase complex"/>
    <property type="evidence" value="ECO:0007669"/>
    <property type="project" value="UniProtKB-UniRule"/>
</dbReference>
<dbReference type="GO" id="GO:0005886">
    <property type="term" value="C:plasma membrane"/>
    <property type="evidence" value="ECO:0007669"/>
    <property type="project" value="UniProtKB-SubCell"/>
</dbReference>
<dbReference type="GO" id="GO:0000104">
    <property type="term" value="F:succinate dehydrogenase activity"/>
    <property type="evidence" value="ECO:0007669"/>
    <property type="project" value="UniProtKB-UniRule"/>
</dbReference>
<dbReference type="GO" id="GO:0006106">
    <property type="term" value="P:fumarate metabolic process"/>
    <property type="evidence" value="ECO:0007669"/>
    <property type="project" value="InterPro"/>
</dbReference>
<dbReference type="CDD" id="cd00547">
    <property type="entry name" value="QFR_TypeD_subunitD"/>
    <property type="match status" value="1"/>
</dbReference>
<dbReference type="FunFam" id="1.20.1300.10:FF:000002">
    <property type="entry name" value="Fumarate reductase subunit D"/>
    <property type="match status" value="1"/>
</dbReference>
<dbReference type="Gene3D" id="1.20.1300.10">
    <property type="entry name" value="Fumarate reductase/succinate dehydrogenase, transmembrane subunit"/>
    <property type="match status" value="1"/>
</dbReference>
<dbReference type="HAMAP" id="MF_00709">
    <property type="entry name" value="Fumarate_red_D"/>
    <property type="match status" value="1"/>
</dbReference>
<dbReference type="InterPro" id="IPR003418">
    <property type="entry name" value="Fumarate_red_D"/>
</dbReference>
<dbReference type="InterPro" id="IPR034804">
    <property type="entry name" value="SQR/QFR_C/D"/>
</dbReference>
<dbReference type="NCBIfam" id="NF003977">
    <property type="entry name" value="PRK05470.1-1"/>
    <property type="match status" value="1"/>
</dbReference>
<dbReference type="Pfam" id="PF02313">
    <property type="entry name" value="Fumarate_red_D"/>
    <property type="match status" value="1"/>
</dbReference>
<dbReference type="PIRSF" id="PIRSF000179">
    <property type="entry name" value="FrdD"/>
    <property type="match status" value="1"/>
</dbReference>
<dbReference type="SUPFAM" id="SSF81343">
    <property type="entry name" value="Fumarate reductase respiratory complex transmembrane subunits"/>
    <property type="match status" value="1"/>
</dbReference>
<name>FRDD_SALPK</name>
<evidence type="ECO:0000255" key="1">
    <source>
        <dbReference type="HAMAP-Rule" id="MF_00709"/>
    </source>
</evidence>
<feature type="chain" id="PRO_1000132414" description="Fumarate reductase subunit D">
    <location>
        <begin position="1"/>
        <end position="119"/>
    </location>
</feature>
<feature type="transmembrane region" description="Helical" evidence="1">
    <location>
        <begin position="25"/>
        <end position="45"/>
    </location>
</feature>
<feature type="transmembrane region" description="Helical" evidence="1">
    <location>
        <begin position="61"/>
        <end position="81"/>
    </location>
</feature>
<feature type="transmembrane region" description="Helical" evidence="1">
    <location>
        <begin position="99"/>
        <end position="119"/>
    </location>
</feature>
<accession>B5BKG4</accession>
<keyword id="KW-0997">Cell inner membrane</keyword>
<keyword id="KW-1003">Cell membrane</keyword>
<keyword id="KW-0472">Membrane</keyword>
<keyword id="KW-0812">Transmembrane</keyword>
<keyword id="KW-1133">Transmembrane helix</keyword>
<reference key="1">
    <citation type="journal article" date="2009" name="BMC Genomics">
        <title>Pseudogene accumulation in the evolutionary histories of Salmonella enterica serovars Paratyphi A and Typhi.</title>
        <authorList>
            <person name="Holt K.E."/>
            <person name="Thomson N.R."/>
            <person name="Wain J."/>
            <person name="Langridge G.C."/>
            <person name="Hasan R."/>
            <person name="Bhutta Z.A."/>
            <person name="Quail M.A."/>
            <person name="Norbertczak H."/>
            <person name="Walker D."/>
            <person name="Simmonds M."/>
            <person name="White B."/>
            <person name="Bason N."/>
            <person name="Mungall K."/>
            <person name="Dougan G."/>
            <person name="Parkhill J."/>
        </authorList>
    </citation>
    <scope>NUCLEOTIDE SEQUENCE [LARGE SCALE GENOMIC DNA]</scope>
    <source>
        <strain>AKU_12601</strain>
    </source>
</reference>
<proteinExistence type="inferred from homology"/>
<sequence length="119" mass="13079">MINPNPKRSDEPVFWGLFGAGGMWGAIIAPVIVLLVGIMLPLGLFPGDALSFERVLTFTQSFIGRVFLFLMIVLPLWCGLHRMHHAMHDLKIHVPAGKWVFYGLAAILTVVTAIGVITL</sequence>
<protein>
    <recommendedName>
        <fullName evidence="1">Fumarate reductase subunit D</fullName>
    </recommendedName>
    <alternativeName>
        <fullName evidence="1">Fumarate reductase 13 kDa hydrophobic protein</fullName>
    </alternativeName>
    <alternativeName>
        <fullName evidence="1">Quinol-fumarate reductase subunit D</fullName>
        <shortName evidence="1">QFR subunit D</shortName>
    </alternativeName>
</protein>
<organism>
    <name type="scientific">Salmonella paratyphi A (strain AKU_12601)</name>
    <dbReference type="NCBI Taxonomy" id="554290"/>
    <lineage>
        <taxon>Bacteria</taxon>
        <taxon>Pseudomonadati</taxon>
        <taxon>Pseudomonadota</taxon>
        <taxon>Gammaproteobacteria</taxon>
        <taxon>Enterobacterales</taxon>
        <taxon>Enterobacteriaceae</taxon>
        <taxon>Salmonella</taxon>
    </lineage>
</organism>
<gene>
    <name evidence="1" type="primary">frdD</name>
    <name type="ordered locus">SSPA3861</name>
</gene>
<comment type="function">
    <text evidence="1">Two distinct, membrane-bound, FAD-containing enzymes are responsible for the catalysis of fumarate and succinate interconversion; fumarate reductase is used in anaerobic growth, and succinate dehydrogenase is used in aerobic growth. Anchors the catalytic components of the fumarate reductase complex to the cell inner membrane, binds quinones.</text>
</comment>
<comment type="subunit">
    <text evidence="1">Part of an enzyme complex containing four subunits: a flavoprotein (FrdA), an iron-sulfur protein (FrdB), and two hydrophobic anchor proteins (FrdC and FrdD).</text>
</comment>
<comment type="subcellular location">
    <subcellularLocation>
        <location evidence="1">Cell inner membrane</location>
        <topology evidence="1">Multi-pass membrane protein</topology>
    </subcellularLocation>
</comment>
<comment type="similarity">
    <text evidence="1">Belongs to the FrdD family.</text>
</comment>